<name>MIAA_TROWT</name>
<organism>
    <name type="scientific">Tropheryma whipplei (strain Twist)</name>
    <name type="common">Whipple's bacillus</name>
    <dbReference type="NCBI Taxonomy" id="203267"/>
    <lineage>
        <taxon>Bacteria</taxon>
        <taxon>Bacillati</taxon>
        <taxon>Actinomycetota</taxon>
        <taxon>Actinomycetes</taxon>
        <taxon>Micrococcales</taxon>
        <taxon>Tropherymataceae</taxon>
        <taxon>Tropheryma</taxon>
    </lineage>
</organism>
<feature type="chain" id="PRO_0000377363" description="tRNA dimethylallyltransferase">
    <location>
        <begin position="1"/>
        <end position="301"/>
    </location>
</feature>
<feature type="region of interest" description="Interaction with substrate tRNA" evidence="1">
    <location>
        <begin position="33"/>
        <end position="36"/>
    </location>
</feature>
<feature type="binding site" evidence="1">
    <location>
        <begin position="8"/>
        <end position="15"/>
    </location>
    <ligand>
        <name>ATP</name>
        <dbReference type="ChEBI" id="CHEBI:30616"/>
    </ligand>
</feature>
<feature type="binding site" evidence="1">
    <location>
        <begin position="10"/>
        <end position="15"/>
    </location>
    <ligand>
        <name>substrate</name>
    </ligand>
</feature>
<feature type="site" description="Interaction with substrate tRNA" evidence="1">
    <location>
        <position position="99"/>
    </location>
</feature>
<feature type="site" description="Interaction with substrate tRNA" evidence="1">
    <location>
        <position position="120"/>
    </location>
</feature>
<dbReference type="EC" id="2.5.1.75" evidence="1"/>
<dbReference type="EMBL" id="AE014184">
    <property type="protein sequence ID" value="AAO44706.1"/>
    <property type="molecule type" value="Genomic_DNA"/>
</dbReference>
<dbReference type="SMR" id="Q820X9"/>
<dbReference type="STRING" id="203267.TWT_609"/>
<dbReference type="KEGG" id="twh:TWT_609"/>
<dbReference type="eggNOG" id="COG0324">
    <property type="taxonomic scope" value="Bacteria"/>
</dbReference>
<dbReference type="HOGENOM" id="CLU_032616_0_1_11"/>
<dbReference type="OrthoDB" id="9776390at2"/>
<dbReference type="Proteomes" id="UP000002200">
    <property type="component" value="Chromosome"/>
</dbReference>
<dbReference type="GO" id="GO:0005524">
    <property type="term" value="F:ATP binding"/>
    <property type="evidence" value="ECO:0007669"/>
    <property type="project" value="UniProtKB-UniRule"/>
</dbReference>
<dbReference type="GO" id="GO:0052381">
    <property type="term" value="F:tRNA dimethylallyltransferase activity"/>
    <property type="evidence" value="ECO:0007669"/>
    <property type="project" value="UniProtKB-UniRule"/>
</dbReference>
<dbReference type="GO" id="GO:0006400">
    <property type="term" value="P:tRNA modification"/>
    <property type="evidence" value="ECO:0007669"/>
    <property type="project" value="TreeGrafter"/>
</dbReference>
<dbReference type="Gene3D" id="1.10.20.140">
    <property type="match status" value="1"/>
</dbReference>
<dbReference type="Gene3D" id="3.40.50.300">
    <property type="entry name" value="P-loop containing nucleotide triphosphate hydrolases"/>
    <property type="match status" value="1"/>
</dbReference>
<dbReference type="HAMAP" id="MF_00185">
    <property type="entry name" value="IPP_trans"/>
    <property type="match status" value="1"/>
</dbReference>
<dbReference type="InterPro" id="IPR039657">
    <property type="entry name" value="Dimethylallyltransferase"/>
</dbReference>
<dbReference type="InterPro" id="IPR018022">
    <property type="entry name" value="IPT"/>
</dbReference>
<dbReference type="InterPro" id="IPR027417">
    <property type="entry name" value="P-loop_NTPase"/>
</dbReference>
<dbReference type="NCBIfam" id="TIGR00174">
    <property type="entry name" value="miaA"/>
    <property type="match status" value="1"/>
</dbReference>
<dbReference type="PANTHER" id="PTHR11088">
    <property type="entry name" value="TRNA DIMETHYLALLYLTRANSFERASE"/>
    <property type="match status" value="1"/>
</dbReference>
<dbReference type="PANTHER" id="PTHR11088:SF60">
    <property type="entry name" value="TRNA DIMETHYLALLYLTRANSFERASE"/>
    <property type="match status" value="1"/>
</dbReference>
<dbReference type="Pfam" id="PF01715">
    <property type="entry name" value="IPPT"/>
    <property type="match status" value="1"/>
</dbReference>
<dbReference type="SUPFAM" id="SSF52540">
    <property type="entry name" value="P-loop containing nucleoside triphosphate hydrolases"/>
    <property type="match status" value="2"/>
</dbReference>
<protein>
    <recommendedName>
        <fullName evidence="1">tRNA dimethylallyltransferase</fullName>
        <ecNumber evidence="1">2.5.1.75</ecNumber>
    </recommendedName>
    <alternativeName>
        <fullName evidence="1">Dimethylallyl diphosphate:tRNA dimethylallyltransferase</fullName>
        <shortName evidence="1">DMAPP:tRNA dimethylallyltransferase</shortName>
        <shortName evidence="1">DMATase</shortName>
    </alternativeName>
    <alternativeName>
        <fullName evidence="1">Isopentenyl-diphosphate:tRNA isopentenyltransferase</fullName>
        <shortName evidence="1">IPP transferase</shortName>
        <shortName evidence="1">IPPT</shortName>
        <shortName evidence="1">IPTase</shortName>
    </alternativeName>
</protein>
<reference key="1">
    <citation type="journal article" date="2003" name="Genome Res.">
        <title>Tropheryma whipplei twist: a human pathogenic Actinobacteria with a reduced genome.</title>
        <authorList>
            <person name="Raoult D."/>
            <person name="Ogata H."/>
            <person name="Audic S."/>
            <person name="Robert C."/>
            <person name="Suhre K."/>
            <person name="Drancourt M."/>
            <person name="Claverie J.-M."/>
        </authorList>
    </citation>
    <scope>NUCLEOTIDE SEQUENCE [LARGE SCALE GENOMIC DNA]</scope>
    <source>
        <strain>Twist</strain>
    </source>
</reference>
<sequence>MLAVAFVGATGTGKSLLSLDAARDFNGHIVNADSMQLYRDMDIGTAKLSHSARQGIPHHQIDVIDPSSEASVARYKLSAQTCIKHIHALNSIPFLVGGSGLYVSSVVHNLQFPPTDGRVRKLLEDEADKSGIGVLHDRLLKLHPGFTVSRGNRRRIIRALEVAYITGRSPNPVLPLQNRANNFIVINLICDKGTLDIRLQKRVESFYDNGLIDEVRLLQEKYVLGRTAAKAIGYKQAIMYLAGEISCADAKDSTLQETIRLANKQIKWFRRYSGQHIVDTTDMSVAYEQIRSILNKSFRIS</sequence>
<evidence type="ECO:0000255" key="1">
    <source>
        <dbReference type="HAMAP-Rule" id="MF_00185"/>
    </source>
</evidence>
<proteinExistence type="inferred from homology"/>
<accession>Q820X9</accession>
<gene>
    <name evidence="1" type="primary">miaA</name>
    <name type="ordered locus">TWT_609</name>
</gene>
<comment type="function">
    <text evidence="1">Catalyzes the transfer of a dimethylallyl group onto the adenine at position 37 in tRNAs that read codons beginning with uridine, leading to the formation of N6-(dimethylallyl)adenosine (i(6)A).</text>
</comment>
<comment type="catalytic activity">
    <reaction evidence="1">
        <text>adenosine(37) in tRNA + dimethylallyl diphosphate = N(6)-dimethylallyladenosine(37) in tRNA + diphosphate</text>
        <dbReference type="Rhea" id="RHEA:26482"/>
        <dbReference type="Rhea" id="RHEA-COMP:10162"/>
        <dbReference type="Rhea" id="RHEA-COMP:10375"/>
        <dbReference type="ChEBI" id="CHEBI:33019"/>
        <dbReference type="ChEBI" id="CHEBI:57623"/>
        <dbReference type="ChEBI" id="CHEBI:74411"/>
        <dbReference type="ChEBI" id="CHEBI:74415"/>
        <dbReference type="EC" id="2.5.1.75"/>
    </reaction>
</comment>
<comment type="cofactor">
    <cofactor evidence="1">
        <name>Mg(2+)</name>
        <dbReference type="ChEBI" id="CHEBI:18420"/>
    </cofactor>
</comment>
<comment type="subunit">
    <text evidence="1">Monomer.</text>
</comment>
<comment type="similarity">
    <text evidence="1">Belongs to the IPP transferase family.</text>
</comment>
<keyword id="KW-0067">ATP-binding</keyword>
<keyword id="KW-0460">Magnesium</keyword>
<keyword id="KW-0547">Nucleotide-binding</keyword>
<keyword id="KW-1185">Reference proteome</keyword>
<keyword id="KW-0808">Transferase</keyword>
<keyword id="KW-0819">tRNA processing</keyword>